<sequence length="513" mass="57893">MGAAAKLAFAVFLISCSSGAILGRSETQECLFFNANWERDRTNQTGVEPCYGDKDKRRHCFATWKNISGSIEIVKQGCWLDDINCYDRTDCIEKKDSPEVYFCCCEGNMCNEKFSYFPEMEVTQPTSNPVTPKPPYYNILLYSLVPLMLIAGIVICAFWVYRHHMMAYPPVLVPTQDPGPPPPSPLLGLKPLQLLEVKARGRFGCVWKAQLLNEYVAVKIFPIQDKQSWQNEYEVYSLPGMKHENILQFIGAEKRGTSVDVDLWLITAFHEKGSLSDFLKANVVSWNELCHIAETMARGLAYLHEDIPGLKDGHKPAISHRDIKSKNVLLKNNLTACIADFGLALKFEAGKSGGDTHGQVGTRRYMAPEVLEGAINFQRDAFLRIDMYAMGLVLWELASRCTAADGPVDEYMLPFEEEIGQHPSLEDMQEVVVHKKKRPVLRDYWQKHAGMAMLCETIEECWDHDAEARLSAGCLGERITQMQRLTNIITTEDIVTVVTMVTNVDFPPKESSL</sequence>
<organism>
    <name type="scientific">Rattus norvegicus</name>
    <name type="common">Rat</name>
    <dbReference type="NCBI Taxonomy" id="10116"/>
    <lineage>
        <taxon>Eukaryota</taxon>
        <taxon>Metazoa</taxon>
        <taxon>Chordata</taxon>
        <taxon>Craniata</taxon>
        <taxon>Vertebrata</taxon>
        <taxon>Euteleostomi</taxon>
        <taxon>Mammalia</taxon>
        <taxon>Eutheria</taxon>
        <taxon>Euarchontoglires</taxon>
        <taxon>Glires</taxon>
        <taxon>Rodentia</taxon>
        <taxon>Myomorpha</taxon>
        <taxon>Muroidea</taxon>
        <taxon>Muridae</taxon>
        <taxon>Murinae</taxon>
        <taxon>Rattus</taxon>
    </lineage>
</organism>
<comment type="function">
    <text evidence="2 3">On ligand binding, forms a receptor complex consisting of two type II and two type I transmembrane serine/threonine kinases. Type II receptors phosphorylate and activate type I receptors which autophosphorylate, then bind and activate SMAD transcriptional regulators. Receptor for activin A, activin B and inhibin A. Mediates induction of adipogenesis by GDF6.</text>
</comment>
<comment type="catalytic activity">
    <reaction evidence="3">
        <text>L-threonyl-[receptor-protein] + ATP = O-phospho-L-threonyl-[receptor-protein] + ADP + H(+)</text>
        <dbReference type="Rhea" id="RHEA:44880"/>
        <dbReference type="Rhea" id="RHEA-COMP:11024"/>
        <dbReference type="Rhea" id="RHEA-COMP:11025"/>
        <dbReference type="ChEBI" id="CHEBI:15378"/>
        <dbReference type="ChEBI" id="CHEBI:30013"/>
        <dbReference type="ChEBI" id="CHEBI:30616"/>
        <dbReference type="ChEBI" id="CHEBI:61977"/>
        <dbReference type="ChEBI" id="CHEBI:456216"/>
        <dbReference type="EC" id="2.7.11.30"/>
    </reaction>
    <physiologicalReaction direction="left-to-right" evidence="3">
        <dbReference type="Rhea" id="RHEA:44881"/>
    </physiologicalReaction>
</comment>
<comment type="catalytic activity">
    <reaction evidence="3">
        <text>L-seryl-[receptor-protein] + ATP = O-phospho-L-seryl-[receptor-protein] + ADP + H(+)</text>
        <dbReference type="Rhea" id="RHEA:18673"/>
        <dbReference type="Rhea" id="RHEA-COMP:11022"/>
        <dbReference type="Rhea" id="RHEA-COMP:11023"/>
        <dbReference type="ChEBI" id="CHEBI:15378"/>
        <dbReference type="ChEBI" id="CHEBI:29999"/>
        <dbReference type="ChEBI" id="CHEBI:30616"/>
        <dbReference type="ChEBI" id="CHEBI:83421"/>
        <dbReference type="ChEBI" id="CHEBI:456216"/>
        <dbReference type="EC" id="2.7.11.30"/>
    </reaction>
    <physiologicalReaction direction="left-to-right" evidence="3">
        <dbReference type="Rhea" id="RHEA:18674"/>
    </physiologicalReaction>
</comment>
<comment type="cofactor">
    <cofactor evidence="1">
        <name>Mg(2+)</name>
        <dbReference type="ChEBI" id="CHEBI:18420"/>
    </cofactor>
    <cofactor evidence="1">
        <name>Mn(2+)</name>
        <dbReference type="ChEBI" id="CHEBI:29035"/>
    </cofactor>
</comment>
<comment type="subunit">
    <text evidence="2 3">Part of a complex consisting of MAGI2/ARIP1, ACVR2A, ACVR1B and SMAD3 (By similarity). Interacts with MAGI2/ARIP1 (By similarity). Interacts with type I receptor ACVR1 (By similarity). Interacts with BMP7 (By similarity). Interacts with TSC22D1/TSC-22 (By similarity). Interacts with activin A/INHBA (By similarity).</text>
</comment>
<comment type="subcellular location">
    <subcellularLocation>
        <location evidence="3">Cell membrane</location>
        <topology evidence="4">Single-pass type I membrane protein</topology>
    </subcellularLocation>
</comment>
<comment type="similarity">
    <text evidence="7">Belongs to the protein kinase superfamily. TKL Ser/Thr protein kinase family. TGFB receptor subfamily.</text>
</comment>
<evidence type="ECO:0000250" key="1"/>
<evidence type="ECO:0000250" key="2">
    <source>
        <dbReference type="UniProtKB" id="P27037"/>
    </source>
</evidence>
<evidence type="ECO:0000250" key="3">
    <source>
        <dbReference type="UniProtKB" id="P27038"/>
    </source>
</evidence>
<evidence type="ECO:0000255" key="4"/>
<evidence type="ECO:0000255" key="5">
    <source>
        <dbReference type="PROSITE-ProRule" id="PRU00159"/>
    </source>
</evidence>
<evidence type="ECO:0000255" key="6">
    <source>
        <dbReference type="PROSITE-ProRule" id="PRU10027"/>
    </source>
</evidence>
<evidence type="ECO:0000305" key="7"/>
<evidence type="ECO:0000305" key="8">
    <source>
    </source>
</evidence>
<evidence type="ECO:0000312" key="9">
    <source>
        <dbReference type="RGD" id="70911"/>
    </source>
</evidence>
<proteinExistence type="evidence at protein level"/>
<keyword id="KW-0002">3D-structure</keyword>
<keyword id="KW-0067">ATP-binding</keyword>
<keyword id="KW-1003">Cell membrane</keyword>
<keyword id="KW-1015">Disulfide bond</keyword>
<keyword id="KW-0325">Glycoprotein</keyword>
<keyword id="KW-0418">Kinase</keyword>
<keyword id="KW-0460">Magnesium</keyword>
<keyword id="KW-0464">Manganese</keyword>
<keyword id="KW-0472">Membrane</keyword>
<keyword id="KW-0479">Metal-binding</keyword>
<keyword id="KW-0547">Nucleotide-binding</keyword>
<keyword id="KW-0675">Receptor</keyword>
<keyword id="KW-1185">Reference proteome</keyword>
<keyword id="KW-0723">Serine/threonine-protein kinase</keyword>
<keyword id="KW-0732">Signal</keyword>
<keyword id="KW-0808">Transferase</keyword>
<keyword id="KW-0812">Transmembrane</keyword>
<keyword id="KW-1133">Transmembrane helix</keyword>
<protein>
    <recommendedName>
        <fullName evidence="8">Activin receptor type-2A</fullName>
        <ecNumber evidence="3">2.7.11.30</ecNumber>
    </recommendedName>
    <alternativeName>
        <fullName>Activin receptor type IIA</fullName>
        <shortName>ACTR-IIA</shortName>
    </alternativeName>
</protein>
<name>AVR2A_RAT</name>
<reference key="1">
    <citation type="journal article" date="1992" name="FEBS Lett.">
        <title>Cloning and sequencing of a rat type II activin receptor.</title>
        <authorList>
            <person name="Shinozaki H."/>
            <person name="Ito I."/>
            <person name="Hasegawa Y."/>
            <person name="Nakamura K."/>
            <person name="Igarashi S."/>
            <person name="Nakamura M."/>
            <person name="Miyamoto K."/>
            <person name="Eto Y."/>
            <person name="Ibuki Y."/>
            <person name="Minegishi T."/>
        </authorList>
    </citation>
    <scope>NUCLEOTIDE SEQUENCE [MRNA]</scope>
    <source>
        <tissue>Ovary</tissue>
    </source>
</reference>
<reference key="2">
    <citation type="journal article" date="1993" name="Endocrinology">
        <title>Expression of type II activin receptor genes in the male and female reproductive tissues of the rat.</title>
        <authorList>
            <person name="Feng Z.M."/>
            <person name="Madigan M.B."/>
            <person name="Chen C.L.C."/>
        </authorList>
    </citation>
    <scope>NUCLEOTIDE SEQUENCE [MRNA]</scope>
    <source>
        <strain>Sprague-Dawley</strain>
        <tissue>Testis</tissue>
    </source>
</reference>
<gene>
    <name evidence="9" type="primary">Acvr2a</name>
    <name type="synonym">Actrii</name>
    <name type="synonym">Acvr2</name>
</gene>
<dbReference type="EC" id="2.7.11.30" evidence="3"/>
<dbReference type="EMBL" id="S48190">
    <property type="protein sequence ID" value="AAB23958.1"/>
    <property type="molecule type" value="mRNA"/>
</dbReference>
<dbReference type="EMBL" id="L10639">
    <property type="protein sequence ID" value="AAA40674.1"/>
    <property type="molecule type" value="mRNA"/>
</dbReference>
<dbReference type="PIR" id="A49193">
    <property type="entry name" value="A49193"/>
</dbReference>
<dbReference type="PIR" id="S27258">
    <property type="entry name" value="S27258"/>
</dbReference>
<dbReference type="RefSeq" id="NP_113759.1">
    <property type="nucleotide sequence ID" value="NM_031571.2"/>
</dbReference>
<dbReference type="PDB" id="1NYS">
    <property type="method" value="X-ray"/>
    <property type="resolution" value="3.05 A"/>
    <property type="chains" value="A/C=34-112"/>
</dbReference>
<dbReference type="PDB" id="1NYU">
    <property type="method" value="X-ray"/>
    <property type="resolution" value="3.10 A"/>
    <property type="chains" value="A/C=34-112"/>
</dbReference>
<dbReference type="PDBsum" id="1NYS"/>
<dbReference type="PDBsum" id="1NYU"/>
<dbReference type="SMR" id="P38444"/>
<dbReference type="FunCoup" id="P38444">
    <property type="interactions" value="3883"/>
</dbReference>
<dbReference type="MINT" id="P38444"/>
<dbReference type="STRING" id="10116.ENSRNOP00000007404"/>
<dbReference type="GlyCosmos" id="P38444">
    <property type="glycosylation" value="2 sites, No reported glycans"/>
</dbReference>
<dbReference type="GlyGen" id="P38444">
    <property type="glycosylation" value="2 sites"/>
</dbReference>
<dbReference type="PhosphoSitePlus" id="P38444"/>
<dbReference type="PaxDb" id="10116-ENSRNOP00000007404"/>
<dbReference type="GeneID" id="29263"/>
<dbReference type="KEGG" id="rno:29263"/>
<dbReference type="UCSC" id="RGD:70911">
    <property type="organism name" value="rat"/>
</dbReference>
<dbReference type="AGR" id="RGD:70911"/>
<dbReference type="CTD" id="92"/>
<dbReference type="RGD" id="70911">
    <property type="gene designation" value="Acvr2a"/>
</dbReference>
<dbReference type="eggNOG" id="KOG3653">
    <property type="taxonomic scope" value="Eukaryota"/>
</dbReference>
<dbReference type="InParanoid" id="P38444"/>
<dbReference type="OrthoDB" id="547665at2759"/>
<dbReference type="PhylomeDB" id="P38444"/>
<dbReference type="BRENDA" id="2.7.10.2">
    <property type="organism ID" value="5301"/>
</dbReference>
<dbReference type="Reactome" id="R-RNO-1502540">
    <property type="pathway name" value="Signaling by Activin"/>
</dbReference>
<dbReference type="Reactome" id="R-RNO-201451">
    <property type="pathway name" value="Signaling by BMP"/>
</dbReference>
<dbReference type="Reactome" id="R-RNO-9839406">
    <property type="pathway name" value="TGFBR3 regulates activin signaling"/>
</dbReference>
<dbReference type="PRO" id="PR:P38444"/>
<dbReference type="Proteomes" id="UP000002494">
    <property type="component" value="Unplaced"/>
</dbReference>
<dbReference type="GO" id="GO:0048179">
    <property type="term" value="C:activin receptor complex"/>
    <property type="evidence" value="ECO:0000318"/>
    <property type="project" value="GO_Central"/>
</dbReference>
<dbReference type="GO" id="GO:0009986">
    <property type="term" value="C:cell surface"/>
    <property type="evidence" value="ECO:0000266"/>
    <property type="project" value="RGD"/>
</dbReference>
<dbReference type="GO" id="GO:0005737">
    <property type="term" value="C:cytoplasm"/>
    <property type="evidence" value="ECO:0000266"/>
    <property type="project" value="RGD"/>
</dbReference>
<dbReference type="GO" id="GO:0034673">
    <property type="term" value="C:inhibin-betaglycan-ActRII complex"/>
    <property type="evidence" value="ECO:0000266"/>
    <property type="project" value="RGD"/>
</dbReference>
<dbReference type="GO" id="GO:0005886">
    <property type="term" value="C:plasma membrane"/>
    <property type="evidence" value="ECO:0000250"/>
    <property type="project" value="UniProtKB"/>
</dbReference>
<dbReference type="GO" id="GO:0043235">
    <property type="term" value="C:receptor complex"/>
    <property type="evidence" value="ECO:0000266"/>
    <property type="project" value="RGD"/>
</dbReference>
<dbReference type="GO" id="GO:0048185">
    <property type="term" value="F:activin binding"/>
    <property type="evidence" value="ECO:0000314"/>
    <property type="project" value="RGD"/>
</dbReference>
<dbReference type="GO" id="GO:0017002">
    <property type="term" value="F:activin receptor activity"/>
    <property type="evidence" value="ECO:0000250"/>
    <property type="project" value="UniProtKB"/>
</dbReference>
<dbReference type="GO" id="GO:0016361">
    <property type="term" value="F:activin receptor activity, type I"/>
    <property type="evidence" value="ECO:0000266"/>
    <property type="project" value="RGD"/>
</dbReference>
<dbReference type="GO" id="GO:0016362">
    <property type="term" value="F:activin receptor activity, type II"/>
    <property type="evidence" value="ECO:0000266"/>
    <property type="project" value="RGD"/>
</dbReference>
<dbReference type="GO" id="GO:0005524">
    <property type="term" value="F:ATP binding"/>
    <property type="evidence" value="ECO:0007669"/>
    <property type="project" value="UniProtKB-KW"/>
</dbReference>
<dbReference type="GO" id="GO:0098821">
    <property type="term" value="F:BMP receptor activity"/>
    <property type="evidence" value="ECO:0000250"/>
    <property type="project" value="UniProtKB"/>
</dbReference>
<dbReference type="GO" id="GO:0015026">
    <property type="term" value="F:coreceptor activity"/>
    <property type="evidence" value="ECO:0000266"/>
    <property type="project" value="RGD"/>
</dbReference>
<dbReference type="GO" id="GO:0019838">
    <property type="term" value="F:growth factor binding"/>
    <property type="evidence" value="ECO:0000266"/>
    <property type="project" value="RGD"/>
</dbReference>
<dbReference type="GO" id="GO:0042802">
    <property type="term" value="F:identical protein binding"/>
    <property type="evidence" value="ECO:0000266"/>
    <property type="project" value="RGD"/>
</dbReference>
<dbReference type="GO" id="GO:0034711">
    <property type="term" value="F:inhibin binding"/>
    <property type="evidence" value="ECO:0000314"/>
    <property type="project" value="RGD"/>
</dbReference>
<dbReference type="GO" id="GO:0046872">
    <property type="term" value="F:metal ion binding"/>
    <property type="evidence" value="ECO:0007669"/>
    <property type="project" value="UniProtKB-KW"/>
</dbReference>
<dbReference type="GO" id="GO:0030165">
    <property type="term" value="F:PDZ domain binding"/>
    <property type="evidence" value="ECO:0000266"/>
    <property type="project" value="RGD"/>
</dbReference>
<dbReference type="GO" id="GO:0004674">
    <property type="term" value="F:protein serine/threonine kinase activity"/>
    <property type="evidence" value="ECO:0000266"/>
    <property type="project" value="RGD"/>
</dbReference>
<dbReference type="GO" id="GO:0004675">
    <property type="term" value="F:transmembrane receptor protein serine/threonine kinase activity"/>
    <property type="evidence" value="ECO:0000304"/>
    <property type="project" value="RGD"/>
</dbReference>
<dbReference type="GO" id="GO:0032924">
    <property type="term" value="P:activin receptor signaling pathway"/>
    <property type="evidence" value="ECO:0000266"/>
    <property type="project" value="RGD"/>
</dbReference>
<dbReference type="GO" id="GO:0030325">
    <property type="term" value="P:adrenal gland development"/>
    <property type="evidence" value="ECO:0000270"/>
    <property type="project" value="RGD"/>
</dbReference>
<dbReference type="GO" id="GO:0009952">
    <property type="term" value="P:anterior/posterior pattern specification"/>
    <property type="evidence" value="ECO:0000266"/>
    <property type="project" value="RGD"/>
</dbReference>
<dbReference type="GO" id="GO:0006914">
    <property type="term" value="P:autophagy"/>
    <property type="evidence" value="ECO:0000315"/>
    <property type="project" value="RGD"/>
</dbReference>
<dbReference type="GO" id="GO:0030509">
    <property type="term" value="P:BMP signaling pathway"/>
    <property type="evidence" value="ECO:0000250"/>
    <property type="project" value="UniProtKB"/>
</dbReference>
<dbReference type="GO" id="GO:0071773">
    <property type="term" value="P:cellular response to BMP stimulus"/>
    <property type="evidence" value="ECO:0000266"/>
    <property type="project" value="RGD"/>
</dbReference>
<dbReference type="GO" id="GO:0071363">
    <property type="term" value="P:cellular response to growth factor stimulus"/>
    <property type="evidence" value="ECO:0000318"/>
    <property type="project" value="GO_Central"/>
</dbReference>
<dbReference type="GO" id="GO:0090650">
    <property type="term" value="P:cellular response to oxygen-glucose deprivation"/>
    <property type="evidence" value="ECO:0000315"/>
    <property type="project" value="RGD"/>
</dbReference>
<dbReference type="GO" id="GO:0007368">
    <property type="term" value="P:determination of left/right symmetry"/>
    <property type="evidence" value="ECO:0000266"/>
    <property type="project" value="RGD"/>
</dbReference>
<dbReference type="GO" id="GO:0048706">
    <property type="term" value="P:embryonic skeletal system development"/>
    <property type="evidence" value="ECO:0000266"/>
    <property type="project" value="RGD"/>
</dbReference>
<dbReference type="GO" id="GO:0001702">
    <property type="term" value="P:gastrulation with mouth forming second"/>
    <property type="evidence" value="ECO:0000266"/>
    <property type="project" value="RGD"/>
</dbReference>
<dbReference type="GO" id="GO:0008584">
    <property type="term" value="P:male gonad development"/>
    <property type="evidence" value="ECO:0000266"/>
    <property type="project" value="RGD"/>
</dbReference>
<dbReference type="GO" id="GO:0007498">
    <property type="term" value="P:mesoderm development"/>
    <property type="evidence" value="ECO:0000266"/>
    <property type="project" value="RGD"/>
</dbReference>
<dbReference type="GO" id="GO:0042475">
    <property type="term" value="P:odontogenesis of dentin-containing tooth"/>
    <property type="evidence" value="ECO:0000266"/>
    <property type="project" value="RGD"/>
</dbReference>
<dbReference type="GO" id="GO:0001649">
    <property type="term" value="P:osteoblast differentiation"/>
    <property type="evidence" value="ECO:0000266"/>
    <property type="project" value="RGD"/>
</dbReference>
<dbReference type="GO" id="GO:0007389">
    <property type="term" value="P:pattern specification process"/>
    <property type="evidence" value="ECO:0000318"/>
    <property type="project" value="GO_Central"/>
</dbReference>
<dbReference type="GO" id="GO:0043084">
    <property type="term" value="P:penile erection"/>
    <property type="evidence" value="ECO:0000266"/>
    <property type="project" value="RGD"/>
</dbReference>
<dbReference type="GO" id="GO:0032927">
    <property type="term" value="P:positive regulation of activin receptor signaling pathway"/>
    <property type="evidence" value="ECO:0000266"/>
    <property type="project" value="RGD"/>
</dbReference>
<dbReference type="GO" id="GO:0030501">
    <property type="term" value="P:positive regulation of bone mineralization"/>
    <property type="evidence" value="ECO:0000266"/>
    <property type="project" value="RGD"/>
</dbReference>
<dbReference type="GO" id="GO:0045648">
    <property type="term" value="P:positive regulation of erythrocyte differentiation"/>
    <property type="evidence" value="ECO:0000266"/>
    <property type="project" value="RGD"/>
</dbReference>
<dbReference type="GO" id="GO:0046881">
    <property type="term" value="P:positive regulation of follicle-stimulating hormone secretion"/>
    <property type="evidence" value="ECO:0000315"/>
    <property type="project" value="RGD"/>
</dbReference>
<dbReference type="GO" id="GO:0045669">
    <property type="term" value="P:positive regulation of osteoblast differentiation"/>
    <property type="evidence" value="ECO:0000266"/>
    <property type="project" value="RGD"/>
</dbReference>
<dbReference type="GO" id="GO:0060391">
    <property type="term" value="P:positive regulation of SMAD protein signal transduction"/>
    <property type="evidence" value="ECO:0000266"/>
    <property type="project" value="RGD"/>
</dbReference>
<dbReference type="GO" id="GO:0045944">
    <property type="term" value="P:positive regulation of transcription by RNA polymerase II"/>
    <property type="evidence" value="ECO:0000266"/>
    <property type="project" value="RGD"/>
</dbReference>
<dbReference type="GO" id="GO:0045428">
    <property type="term" value="P:regulation of nitric oxide biosynthetic process"/>
    <property type="evidence" value="ECO:0000266"/>
    <property type="project" value="RGD"/>
</dbReference>
<dbReference type="GO" id="GO:0009966">
    <property type="term" value="P:regulation of signal transduction"/>
    <property type="evidence" value="ECO:0000266"/>
    <property type="project" value="RGD"/>
</dbReference>
<dbReference type="GO" id="GO:0060011">
    <property type="term" value="P:Sertoli cell proliferation"/>
    <property type="evidence" value="ECO:0000266"/>
    <property type="project" value="RGD"/>
</dbReference>
<dbReference type="GO" id="GO:0060395">
    <property type="term" value="P:SMAD protein signal transduction"/>
    <property type="evidence" value="ECO:0000315"/>
    <property type="project" value="RGD"/>
</dbReference>
<dbReference type="GO" id="GO:0042713">
    <property type="term" value="P:sperm ejaculation"/>
    <property type="evidence" value="ECO:0000266"/>
    <property type="project" value="RGD"/>
</dbReference>
<dbReference type="GO" id="GO:0007283">
    <property type="term" value="P:spermatogenesis"/>
    <property type="evidence" value="ECO:0000266"/>
    <property type="project" value="RGD"/>
</dbReference>
<dbReference type="CDD" id="cd14141">
    <property type="entry name" value="STKc_ACVR2a"/>
    <property type="match status" value="1"/>
</dbReference>
<dbReference type="CDD" id="cd23631">
    <property type="entry name" value="TFP_LU_ECD_ACVR2A"/>
    <property type="match status" value="1"/>
</dbReference>
<dbReference type="FunFam" id="1.10.510.10:FF:000099">
    <property type="entry name" value="Serine/threonine-protein kinase receptor"/>
    <property type="match status" value="1"/>
</dbReference>
<dbReference type="FunFam" id="2.10.60.10:FF:000002">
    <property type="entry name" value="Serine/threonine-protein kinase receptor"/>
    <property type="match status" value="1"/>
</dbReference>
<dbReference type="FunFam" id="3.30.200.20:FF:000094">
    <property type="entry name" value="Serine/threonine-protein kinase receptor"/>
    <property type="match status" value="1"/>
</dbReference>
<dbReference type="Gene3D" id="2.10.60.10">
    <property type="entry name" value="CD59"/>
    <property type="match status" value="1"/>
</dbReference>
<dbReference type="Gene3D" id="3.30.200.20">
    <property type="entry name" value="Phosphorylase Kinase, domain 1"/>
    <property type="match status" value="1"/>
</dbReference>
<dbReference type="Gene3D" id="1.10.510.10">
    <property type="entry name" value="Transferase(Phosphotransferase) domain 1"/>
    <property type="match status" value="1"/>
</dbReference>
<dbReference type="InterPro" id="IPR000472">
    <property type="entry name" value="Activin_recp"/>
</dbReference>
<dbReference type="InterPro" id="IPR011009">
    <property type="entry name" value="Kinase-like_dom_sf"/>
</dbReference>
<dbReference type="InterPro" id="IPR000719">
    <property type="entry name" value="Prot_kinase_dom"/>
</dbReference>
<dbReference type="InterPro" id="IPR008271">
    <property type="entry name" value="Ser/Thr_kinase_AS"/>
</dbReference>
<dbReference type="InterPro" id="IPR045860">
    <property type="entry name" value="Snake_toxin-like_sf"/>
</dbReference>
<dbReference type="InterPro" id="IPR000333">
    <property type="entry name" value="TGFB_receptor"/>
</dbReference>
<dbReference type="PANTHER" id="PTHR23255:SF64">
    <property type="entry name" value="ACTIVIN RECEPTOR TYPE-2A"/>
    <property type="match status" value="1"/>
</dbReference>
<dbReference type="PANTHER" id="PTHR23255">
    <property type="entry name" value="TRANSFORMING GROWTH FACTOR-BETA RECEPTOR TYPE I AND II"/>
    <property type="match status" value="1"/>
</dbReference>
<dbReference type="Pfam" id="PF01064">
    <property type="entry name" value="Activin_recp"/>
    <property type="match status" value="1"/>
</dbReference>
<dbReference type="Pfam" id="PF00069">
    <property type="entry name" value="Pkinase"/>
    <property type="match status" value="1"/>
</dbReference>
<dbReference type="PRINTS" id="PR00653">
    <property type="entry name" value="ACTIVIN2R"/>
</dbReference>
<dbReference type="SMART" id="SM00220">
    <property type="entry name" value="S_TKc"/>
    <property type="match status" value="1"/>
</dbReference>
<dbReference type="SUPFAM" id="SSF56112">
    <property type="entry name" value="Protein kinase-like (PK-like)"/>
    <property type="match status" value="1"/>
</dbReference>
<dbReference type="SUPFAM" id="SSF57302">
    <property type="entry name" value="Snake toxin-like"/>
    <property type="match status" value="1"/>
</dbReference>
<dbReference type="PROSITE" id="PS50011">
    <property type="entry name" value="PROTEIN_KINASE_DOM"/>
    <property type="match status" value="1"/>
</dbReference>
<dbReference type="PROSITE" id="PS00108">
    <property type="entry name" value="PROTEIN_KINASE_ST"/>
    <property type="match status" value="1"/>
</dbReference>
<feature type="signal peptide" evidence="4">
    <location>
        <begin position="1"/>
        <end position="19"/>
    </location>
</feature>
<feature type="chain" id="PRO_0000024401" description="Activin receptor type-2A">
    <location>
        <begin position="20"/>
        <end position="513"/>
    </location>
</feature>
<feature type="topological domain" description="Extracellular" evidence="4">
    <location>
        <begin position="20"/>
        <end position="135"/>
    </location>
</feature>
<feature type="transmembrane region" description="Helical" evidence="4">
    <location>
        <begin position="136"/>
        <end position="161"/>
    </location>
</feature>
<feature type="topological domain" description="Cytoplasmic" evidence="4">
    <location>
        <begin position="162"/>
        <end position="513"/>
    </location>
</feature>
<feature type="domain" description="Protein kinase" evidence="5">
    <location>
        <begin position="192"/>
        <end position="485"/>
    </location>
</feature>
<feature type="active site" description="Proton acceptor" evidence="5 6">
    <location>
        <position position="322"/>
    </location>
</feature>
<feature type="binding site" evidence="5">
    <location>
        <begin position="198"/>
        <end position="206"/>
    </location>
    <ligand>
        <name>ATP</name>
        <dbReference type="ChEBI" id="CHEBI:30616"/>
    </ligand>
</feature>
<feature type="binding site" evidence="5">
    <location>
        <position position="219"/>
    </location>
    <ligand>
        <name>ATP</name>
        <dbReference type="ChEBI" id="CHEBI:30616"/>
    </ligand>
</feature>
<feature type="glycosylation site" description="N-linked (GlcNAc...) asparagine" evidence="4">
    <location>
        <position position="43"/>
    </location>
</feature>
<feature type="glycosylation site" description="N-linked (GlcNAc...) asparagine" evidence="4">
    <location>
        <position position="66"/>
    </location>
</feature>
<feature type="disulfide bond" evidence="3">
    <location>
        <begin position="30"/>
        <end position="60"/>
    </location>
</feature>
<feature type="disulfide bond" evidence="3">
    <location>
        <begin position="50"/>
        <end position="78"/>
    </location>
</feature>
<feature type="disulfide bond" evidence="3">
    <location>
        <begin position="85"/>
        <end position="104"/>
    </location>
</feature>
<feature type="disulfide bond" evidence="3">
    <location>
        <begin position="91"/>
        <end position="103"/>
    </location>
</feature>
<feature type="disulfide bond" evidence="3">
    <location>
        <begin position="105"/>
        <end position="110"/>
    </location>
</feature>
<feature type="sequence conflict" description="In Ref. 2; AAB23958." evidence="7" ref="2">
    <original>M</original>
    <variation>K</variation>
    <location>
        <position position="165"/>
    </location>
</feature>
<feature type="sequence conflict" description="In Ref. 2; AAB23958." evidence="7" ref="2">
    <original>V</original>
    <variation>I</variation>
    <location>
        <position position="218"/>
    </location>
</feature>
<feature type="sequence conflict" description="In Ref. 2; AAB23958." evidence="7" ref="2">
    <original>G</original>
    <variation>A</variation>
    <location>
        <position position="353"/>
    </location>
</feature>
<feature type="sequence conflict" description="In Ref. 2; AAB23958." evidence="7" ref="2">
    <original>L</original>
    <variation>V</variation>
    <location>
        <position position="475"/>
    </location>
</feature>
<accession>P38444</accession>